<comment type="function">
    <text evidence="1">Pore-forming subunit of a potassium efflux system that confers protection against electrophiles. Catalyzes K(+)/H(+) antiport.</text>
</comment>
<comment type="subunit">
    <text evidence="1">Homodimer. Interacts with the regulatory subunit KefF.</text>
</comment>
<comment type="subcellular location">
    <subcellularLocation>
        <location evidence="1">Cell inner membrane</location>
        <topology evidence="1">Multi-pass membrane protein</topology>
    </subcellularLocation>
</comment>
<comment type="similarity">
    <text evidence="1">Belongs to the monovalent cation:proton antiporter 2 (CPA2) transporter (TC 2.A.37) family. KefC subfamily.</text>
</comment>
<organism>
    <name type="scientific">Escherichia coli O45:K1 (strain S88 / ExPEC)</name>
    <dbReference type="NCBI Taxonomy" id="585035"/>
    <lineage>
        <taxon>Bacteria</taxon>
        <taxon>Pseudomonadati</taxon>
        <taxon>Pseudomonadota</taxon>
        <taxon>Gammaproteobacteria</taxon>
        <taxon>Enterobacterales</taxon>
        <taxon>Enterobacteriaceae</taxon>
        <taxon>Escherichia</taxon>
    </lineage>
</organism>
<protein>
    <recommendedName>
        <fullName evidence="1">Glutathione-regulated potassium-efflux system protein KefC</fullName>
    </recommendedName>
    <alternativeName>
        <fullName evidence="1">K(+)/H(+) antiporter</fullName>
    </alternativeName>
</protein>
<reference key="1">
    <citation type="journal article" date="2009" name="PLoS Genet.">
        <title>Organised genome dynamics in the Escherichia coli species results in highly diverse adaptive paths.</title>
        <authorList>
            <person name="Touchon M."/>
            <person name="Hoede C."/>
            <person name="Tenaillon O."/>
            <person name="Barbe V."/>
            <person name="Baeriswyl S."/>
            <person name="Bidet P."/>
            <person name="Bingen E."/>
            <person name="Bonacorsi S."/>
            <person name="Bouchier C."/>
            <person name="Bouvet O."/>
            <person name="Calteau A."/>
            <person name="Chiapello H."/>
            <person name="Clermont O."/>
            <person name="Cruveiller S."/>
            <person name="Danchin A."/>
            <person name="Diard M."/>
            <person name="Dossat C."/>
            <person name="Karoui M.E."/>
            <person name="Frapy E."/>
            <person name="Garry L."/>
            <person name="Ghigo J.M."/>
            <person name="Gilles A.M."/>
            <person name="Johnson J."/>
            <person name="Le Bouguenec C."/>
            <person name="Lescat M."/>
            <person name="Mangenot S."/>
            <person name="Martinez-Jehanne V."/>
            <person name="Matic I."/>
            <person name="Nassif X."/>
            <person name="Oztas S."/>
            <person name="Petit M.A."/>
            <person name="Pichon C."/>
            <person name="Rouy Z."/>
            <person name="Ruf C.S."/>
            <person name="Schneider D."/>
            <person name="Tourret J."/>
            <person name="Vacherie B."/>
            <person name="Vallenet D."/>
            <person name="Medigue C."/>
            <person name="Rocha E.P.C."/>
            <person name="Denamur E."/>
        </authorList>
    </citation>
    <scope>NUCLEOTIDE SEQUENCE [LARGE SCALE GENOMIC DNA]</scope>
    <source>
        <strain>S88 / ExPEC</strain>
    </source>
</reference>
<accession>B7MAH0</accession>
<evidence type="ECO:0000255" key="1">
    <source>
        <dbReference type="HAMAP-Rule" id="MF_01413"/>
    </source>
</evidence>
<evidence type="ECO:0000255" key="2">
    <source>
        <dbReference type="PROSITE-ProRule" id="PRU00543"/>
    </source>
</evidence>
<evidence type="ECO:0000256" key="3">
    <source>
        <dbReference type="SAM" id="MobiDB-lite"/>
    </source>
</evidence>
<sequence length="620" mass="67720">MDSHTLIQALIYLGSAALIVPIAVRLGLGSVLGYLIAGCIIGPWGLRLVTDAESILHFAEIGVVLMLFIIGLELDPQRLWKLRAAVFGGGALQMVICGGLLGLFCMLLGLRWQVAELIGMTLALSSTAIAMQAMNERNLMVTQMGRSAFAVLLFQDIAAIPLVAMIPLLAASSASTTMGAFVLSALKVAGALALVVLLGRYVTRPALRFVARSGLREVFSAVALFLVFGFGLLLEEVGLSMAMGAFLAGVLLASSEYRHALESDIEPFKGLLLGLFFIGVGMSIDFGTLIENPLRIVILLLGFLIIKIAMLWLIARPLQVPNKQRRWFAVLLGQGSEFAFVVFGAAQMANVLEPEWAKSLTLAVALSMAATPILLVILNRLEQSSTEEAREADEIDEEQPRVIIAGFGRFGQITGRLLLSSGVKMVVLDHDPDHIETLRKFGMKVFYGDATRMDLLESAGAAKAEVLINAIDDPQTNLQLTEMVKEHFPHLQIIARARDVDHYIRLRQAGVEKPERETFEGALKTGRLALESLGLGPYEARERADVFRRFNIQMVEEMAMVENDTKARAAVYKRTSAMLSEIITEDREHLSLIQRHGWQGTEEGKHTGNMADEPETKPSS</sequence>
<dbReference type="EMBL" id="CU928161">
    <property type="protein sequence ID" value="CAR01416.1"/>
    <property type="molecule type" value="Genomic_DNA"/>
</dbReference>
<dbReference type="RefSeq" id="WP_000377122.1">
    <property type="nucleotide sequence ID" value="NC_011742.1"/>
</dbReference>
<dbReference type="SMR" id="B7MAH0"/>
<dbReference type="KEGG" id="ecz:ECS88_0050"/>
<dbReference type="HOGENOM" id="CLU_005126_9_3_6"/>
<dbReference type="Proteomes" id="UP000000747">
    <property type="component" value="Chromosome"/>
</dbReference>
<dbReference type="GO" id="GO:0005886">
    <property type="term" value="C:plasma membrane"/>
    <property type="evidence" value="ECO:0007669"/>
    <property type="project" value="UniProtKB-SubCell"/>
</dbReference>
<dbReference type="GO" id="GO:0019899">
    <property type="term" value="F:enzyme binding"/>
    <property type="evidence" value="ECO:0007669"/>
    <property type="project" value="InterPro"/>
</dbReference>
<dbReference type="GO" id="GO:0015503">
    <property type="term" value="F:glutathione-regulated potassium exporter activity"/>
    <property type="evidence" value="ECO:0007669"/>
    <property type="project" value="UniProtKB-UniRule"/>
</dbReference>
<dbReference type="GO" id="GO:0015643">
    <property type="term" value="F:toxic substance binding"/>
    <property type="evidence" value="ECO:0007669"/>
    <property type="project" value="InterPro"/>
</dbReference>
<dbReference type="GO" id="GO:1902600">
    <property type="term" value="P:proton transmembrane transport"/>
    <property type="evidence" value="ECO:0007669"/>
    <property type="project" value="InterPro"/>
</dbReference>
<dbReference type="GO" id="GO:0051595">
    <property type="term" value="P:response to methylglyoxal"/>
    <property type="evidence" value="ECO:0007669"/>
    <property type="project" value="InterPro"/>
</dbReference>
<dbReference type="FunFam" id="1.20.1530.20:FF:000001">
    <property type="entry name" value="Glutathione-regulated potassium-efflux system protein KefB"/>
    <property type="match status" value="1"/>
</dbReference>
<dbReference type="FunFam" id="3.40.50.720:FF:000036">
    <property type="entry name" value="Glutathione-regulated potassium-efflux system protein KefB"/>
    <property type="match status" value="1"/>
</dbReference>
<dbReference type="Gene3D" id="1.20.1530.20">
    <property type="match status" value="1"/>
</dbReference>
<dbReference type="Gene3D" id="3.40.50.720">
    <property type="entry name" value="NAD(P)-binding Rossmann-like Domain"/>
    <property type="match status" value="1"/>
</dbReference>
<dbReference type="HAMAP" id="MF_01413">
    <property type="entry name" value="K_H_efflux_KefC"/>
    <property type="match status" value="1"/>
</dbReference>
<dbReference type="InterPro" id="IPR006153">
    <property type="entry name" value="Cation/H_exchanger_TM"/>
</dbReference>
<dbReference type="InterPro" id="IPR004771">
    <property type="entry name" value="K/H_exchanger"/>
</dbReference>
<dbReference type="InterPro" id="IPR023941">
    <property type="entry name" value="K_H_efflux_KefC"/>
</dbReference>
<dbReference type="InterPro" id="IPR006036">
    <property type="entry name" value="K_uptake_TrkA"/>
</dbReference>
<dbReference type="InterPro" id="IPR038770">
    <property type="entry name" value="Na+/solute_symporter_sf"/>
</dbReference>
<dbReference type="InterPro" id="IPR036291">
    <property type="entry name" value="NAD(P)-bd_dom_sf"/>
</dbReference>
<dbReference type="InterPro" id="IPR003148">
    <property type="entry name" value="RCK_N"/>
</dbReference>
<dbReference type="NCBIfam" id="TIGR00932">
    <property type="entry name" value="2a37"/>
    <property type="match status" value="1"/>
</dbReference>
<dbReference type="NCBIfam" id="NF002924">
    <property type="entry name" value="PRK03562.1"/>
    <property type="match status" value="1"/>
</dbReference>
<dbReference type="PANTHER" id="PTHR46157:SF3">
    <property type="entry name" value="GLUTATHIONE-REGULATED POTASSIUM-EFFLUX SYSTEM PROTEIN KEFC"/>
    <property type="match status" value="1"/>
</dbReference>
<dbReference type="PANTHER" id="PTHR46157">
    <property type="entry name" value="K(+) EFFLUX ANTIPORTER 3, CHLOROPLASTIC"/>
    <property type="match status" value="1"/>
</dbReference>
<dbReference type="Pfam" id="PF00999">
    <property type="entry name" value="Na_H_Exchanger"/>
    <property type="match status" value="1"/>
</dbReference>
<dbReference type="Pfam" id="PF02254">
    <property type="entry name" value="TrkA_N"/>
    <property type="match status" value="1"/>
</dbReference>
<dbReference type="PRINTS" id="PR00335">
    <property type="entry name" value="KUPTAKETRKA"/>
</dbReference>
<dbReference type="SUPFAM" id="SSF51735">
    <property type="entry name" value="NAD(P)-binding Rossmann-fold domains"/>
    <property type="match status" value="1"/>
</dbReference>
<dbReference type="PROSITE" id="PS51201">
    <property type="entry name" value="RCK_N"/>
    <property type="match status" value="1"/>
</dbReference>
<gene>
    <name evidence="1" type="primary">kefC</name>
    <name type="ordered locus">ECS88_0050</name>
</gene>
<feature type="chain" id="PRO_1000145535" description="Glutathione-regulated potassium-efflux system protein KefC">
    <location>
        <begin position="1"/>
        <end position="620"/>
    </location>
</feature>
<feature type="transmembrane region" description="Helical" evidence="1">
    <location>
        <begin position="4"/>
        <end position="24"/>
    </location>
</feature>
<feature type="transmembrane region" description="Helical" evidence="1">
    <location>
        <begin position="26"/>
        <end position="46"/>
    </location>
</feature>
<feature type="transmembrane region" description="Helical" evidence="1">
    <location>
        <begin position="54"/>
        <end position="74"/>
    </location>
</feature>
<feature type="transmembrane region" description="Helical" evidence="1">
    <location>
        <begin position="90"/>
        <end position="110"/>
    </location>
</feature>
<feature type="transmembrane region" description="Helical" evidence="1">
    <location>
        <begin position="114"/>
        <end position="134"/>
    </location>
</feature>
<feature type="transmembrane region" description="Helical" evidence="1">
    <location>
        <begin position="149"/>
        <end position="169"/>
    </location>
</feature>
<feature type="transmembrane region" description="Helical" evidence="1">
    <location>
        <begin position="178"/>
        <end position="198"/>
    </location>
</feature>
<feature type="transmembrane region" description="Helical" evidence="1">
    <location>
        <begin position="218"/>
        <end position="238"/>
    </location>
</feature>
<feature type="transmembrane region" description="Helical" evidence="1">
    <location>
        <begin position="270"/>
        <end position="290"/>
    </location>
</feature>
<feature type="transmembrane region" description="Helical" evidence="1">
    <location>
        <begin position="294"/>
        <end position="314"/>
    </location>
</feature>
<feature type="transmembrane region" description="Helical" evidence="1">
    <location>
        <begin position="327"/>
        <end position="347"/>
    </location>
</feature>
<feature type="transmembrane region" description="Helical" evidence="1">
    <location>
        <begin position="359"/>
        <end position="379"/>
    </location>
</feature>
<feature type="domain" description="RCK N-terminal" evidence="2">
    <location>
        <begin position="399"/>
        <end position="518"/>
    </location>
</feature>
<feature type="region of interest" description="Disordered" evidence="3">
    <location>
        <begin position="597"/>
        <end position="620"/>
    </location>
</feature>
<keyword id="KW-0050">Antiport</keyword>
<keyword id="KW-0997">Cell inner membrane</keyword>
<keyword id="KW-1003">Cell membrane</keyword>
<keyword id="KW-0406">Ion transport</keyword>
<keyword id="KW-0472">Membrane</keyword>
<keyword id="KW-0630">Potassium</keyword>
<keyword id="KW-0633">Potassium transport</keyword>
<keyword id="KW-1185">Reference proteome</keyword>
<keyword id="KW-0812">Transmembrane</keyword>
<keyword id="KW-1133">Transmembrane helix</keyword>
<keyword id="KW-0813">Transport</keyword>
<name>KEFC_ECO45</name>
<proteinExistence type="inferred from homology"/>